<comment type="function">
    <text evidence="1">Hydrolyzes ureidoacrylate to form aminoacrylate and carbamate. The carbamate hydrolyzes spontaneously, thereby releasing one of the nitrogen atoms of the pyrimidine ring as ammonia and one of its carbon atoms as CO2.</text>
</comment>
<comment type="catalytic activity">
    <reaction evidence="1">
        <text>(Z)-3-ureidoacrylate + H2O + H(+) = (Z)-3-aminoacrylate + NH4(+) + CO2</text>
        <dbReference type="Rhea" id="RHEA:42624"/>
        <dbReference type="ChEBI" id="CHEBI:15377"/>
        <dbReference type="ChEBI" id="CHEBI:15378"/>
        <dbReference type="ChEBI" id="CHEBI:16526"/>
        <dbReference type="ChEBI" id="CHEBI:28938"/>
        <dbReference type="ChEBI" id="CHEBI:59891"/>
        <dbReference type="ChEBI" id="CHEBI:59894"/>
        <dbReference type="EC" id="3.5.1.110"/>
    </reaction>
</comment>
<comment type="catalytic activity">
    <reaction evidence="1">
        <text>(Z)-3-ureidoacrylate + H2O = (Z)-3-aminoacrylate + carbamate + H(+)</text>
        <dbReference type="Rhea" id="RHEA:31603"/>
        <dbReference type="ChEBI" id="CHEBI:13941"/>
        <dbReference type="ChEBI" id="CHEBI:15377"/>
        <dbReference type="ChEBI" id="CHEBI:15378"/>
        <dbReference type="ChEBI" id="CHEBI:59891"/>
        <dbReference type="ChEBI" id="CHEBI:59894"/>
    </reaction>
</comment>
<comment type="catalytic activity">
    <reaction evidence="1">
        <text>(Z)-2-methylureidoacrylate + H2O + H(+) = (Z)-2-methylaminoacrylate + NH4(+) + CO2</text>
        <dbReference type="Rhea" id="RHEA:42620"/>
        <dbReference type="ChEBI" id="CHEBI:15377"/>
        <dbReference type="ChEBI" id="CHEBI:15378"/>
        <dbReference type="ChEBI" id="CHEBI:16526"/>
        <dbReference type="ChEBI" id="CHEBI:28938"/>
        <dbReference type="ChEBI" id="CHEBI:143783"/>
        <dbReference type="ChEBI" id="CHEBI:145735"/>
        <dbReference type="EC" id="3.5.1.110"/>
    </reaction>
</comment>
<comment type="similarity">
    <text evidence="1">Belongs to the isochorismatase family. RutB subfamily.</text>
</comment>
<proteinExistence type="inferred from homology"/>
<dbReference type="EC" id="3.5.1.110" evidence="1"/>
<dbReference type="EMBL" id="CP000629">
    <property type="protein sequence ID" value="ACM28652.1"/>
    <property type="molecule type" value="Genomic_DNA"/>
</dbReference>
<dbReference type="RefSeq" id="WP_012649157.1">
    <property type="nucleotide sequence ID" value="NC_011983.1"/>
</dbReference>
<dbReference type="SMR" id="B9JLT8"/>
<dbReference type="STRING" id="311403.Arad_7072"/>
<dbReference type="GeneID" id="86850964"/>
<dbReference type="KEGG" id="ara:Arad_7072"/>
<dbReference type="eggNOG" id="COG1335">
    <property type="taxonomic scope" value="Bacteria"/>
</dbReference>
<dbReference type="HOGENOM" id="CLU_068979_8_0_5"/>
<dbReference type="Proteomes" id="UP000001600">
    <property type="component" value="Chromosome 2"/>
</dbReference>
<dbReference type="GO" id="GO:0016811">
    <property type="term" value="F:hydrolase activity, acting on carbon-nitrogen (but not peptide) bonds, in linear amides"/>
    <property type="evidence" value="ECO:0007669"/>
    <property type="project" value="UniProtKB-UniRule"/>
</dbReference>
<dbReference type="GO" id="GO:0019740">
    <property type="term" value="P:nitrogen utilization"/>
    <property type="evidence" value="ECO:0007669"/>
    <property type="project" value="UniProtKB-UniRule"/>
</dbReference>
<dbReference type="GO" id="GO:0006212">
    <property type="term" value="P:uracil catabolic process"/>
    <property type="evidence" value="ECO:0007669"/>
    <property type="project" value="UniProtKB-UniRule"/>
</dbReference>
<dbReference type="CDD" id="cd00431">
    <property type="entry name" value="cysteine_hydrolases"/>
    <property type="match status" value="1"/>
</dbReference>
<dbReference type="Gene3D" id="3.40.50.850">
    <property type="entry name" value="Isochorismatase-like"/>
    <property type="match status" value="1"/>
</dbReference>
<dbReference type="HAMAP" id="MF_00830">
    <property type="entry name" value="RutB"/>
    <property type="match status" value="1"/>
</dbReference>
<dbReference type="InterPro" id="IPR000868">
    <property type="entry name" value="Isochorismatase-like_dom"/>
</dbReference>
<dbReference type="InterPro" id="IPR050272">
    <property type="entry name" value="Isochorismatase-like_hydrls"/>
</dbReference>
<dbReference type="InterPro" id="IPR036380">
    <property type="entry name" value="Isochorismatase-like_sf"/>
</dbReference>
<dbReference type="InterPro" id="IPR019916">
    <property type="entry name" value="RutB"/>
</dbReference>
<dbReference type="NCBIfam" id="TIGR03614">
    <property type="entry name" value="RutB"/>
    <property type="match status" value="1"/>
</dbReference>
<dbReference type="PANTHER" id="PTHR43540:SF6">
    <property type="entry name" value="ISOCHORISMATASE-LIKE DOMAIN-CONTAINING PROTEIN"/>
    <property type="match status" value="1"/>
</dbReference>
<dbReference type="PANTHER" id="PTHR43540">
    <property type="entry name" value="PEROXYUREIDOACRYLATE/UREIDOACRYLATE AMIDOHYDROLASE-RELATED"/>
    <property type="match status" value="1"/>
</dbReference>
<dbReference type="Pfam" id="PF00857">
    <property type="entry name" value="Isochorismatase"/>
    <property type="match status" value="1"/>
</dbReference>
<dbReference type="SUPFAM" id="SSF52499">
    <property type="entry name" value="Isochorismatase-like hydrolases"/>
    <property type="match status" value="1"/>
</dbReference>
<sequence>MSAVTAAGYQAPQERSQSVTLPARPEPITLKPSETAVVVVDMQNAYSTEGGYVDLAGFDIAGAKGTIANIKKTLDAARAAGVQVIYFQNGWDKDYVEAGGPGSPNYHKSNALKTMRQRPELQGQLLAKGTWDYAIVDELQPQPGDILVPKTRYSGFFNTNMDSVLRARGIRNLVFVGIATNVCVESSLRDAFHLEYFGVMLEDATHHLGPDFIQQATVYNVEKFFGWVATVNDFCATVSQAAPTEA</sequence>
<accession>B9JLT8</accession>
<protein>
    <recommendedName>
        <fullName evidence="1">Ureidoacrylate amidohydrolase RutB</fullName>
        <ecNumber evidence="1">3.5.1.110</ecNumber>
    </recommendedName>
</protein>
<feature type="chain" id="PRO_0000402646" description="Ureidoacrylate amidohydrolase RutB">
    <location>
        <begin position="1"/>
        <end position="246"/>
    </location>
</feature>
<feature type="region of interest" description="Disordered" evidence="2">
    <location>
        <begin position="1"/>
        <end position="27"/>
    </location>
</feature>
<feature type="active site" description="Proton acceptor" evidence="1">
    <location>
        <position position="41"/>
    </location>
</feature>
<feature type="active site" evidence="1">
    <location>
        <position position="150"/>
    </location>
</feature>
<feature type="active site" description="Nucleophile" evidence="1">
    <location>
        <position position="183"/>
    </location>
</feature>
<reference key="1">
    <citation type="journal article" date="2009" name="J. Bacteriol.">
        <title>Genome sequences of three Agrobacterium biovars help elucidate the evolution of multichromosome genomes in bacteria.</title>
        <authorList>
            <person name="Slater S.C."/>
            <person name="Goldman B.S."/>
            <person name="Goodner B."/>
            <person name="Setubal J.C."/>
            <person name="Farrand S.K."/>
            <person name="Nester E.W."/>
            <person name="Burr T.J."/>
            <person name="Banta L."/>
            <person name="Dickerman A.W."/>
            <person name="Paulsen I."/>
            <person name="Otten L."/>
            <person name="Suen G."/>
            <person name="Welch R."/>
            <person name="Almeida N.F."/>
            <person name="Arnold F."/>
            <person name="Burton O.T."/>
            <person name="Du Z."/>
            <person name="Ewing A."/>
            <person name="Godsy E."/>
            <person name="Heisel S."/>
            <person name="Houmiel K.L."/>
            <person name="Jhaveri J."/>
            <person name="Lu J."/>
            <person name="Miller N.M."/>
            <person name="Norton S."/>
            <person name="Chen Q."/>
            <person name="Phoolcharoen W."/>
            <person name="Ohlin V."/>
            <person name="Ondrusek D."/>
            <person name="Pride N."/>
            <person name="Stricklin S.L."/>
            <person name="Sun J."/>
            <person name="Wheeler C."/>
            <person name="Wilson L."/>
            <person name="Zhu H."/>
            <person name="Wood D.W."/>
        </authorList>
    </citation>
    <scope>NUCLEOTIDE SEQUENCE [LARGE SCALE GENOMIC DNA]</scope>
    <source>
        <strain>K84 / ATCC BAA-868</strain>
    </source>
</reference>
<evidence type="ECO:0000255" key="1">
    <source>
        <dbReference type="HAMAP-Rule" id="MF_00830"/>
    </source>
</evidence>
<evidence type="ECO:0000256" key="2">
    <source>
        <dbReference type="SAM" id="MobiDB-lite"/>
    </source>
</evidence>
<gene>
    <name evidence="1" type="primary">rutB</name>
    <name type="ordered locus">Arad_7072</name>
</gene>
<keyword id="KW-0378">Hydrolase</keyword>
<name>RUTB_RHIR8</name>
<organism>
    <name type="scientific">Rhizobium rhizogenes (strain K84 / ATCC BAA-868)</name>
    <name type="common">Agrobacterium radiobacter</name>
    <dbReference type="NCBI Taxonomy" id="311403"/>
    <lineage>
        <taxon>Bacteria</taxon>
        <taxon>Pseudomonadati</taxon>
        <taxon>Pseudomonadota</taxon>
        <taxon>Alphaproteobacteria</taxon>
        <taxon>Hyphomicrobiales</taxon>
        <taxon>Rhizobiaceae</taxon>
        <taxon>Rhizobium/Agrobacterium group</taxon>
        <taxon>Rhizobium</taxon>
    </lineage>
</organism>